<protein>
    <recommendedName>
        <fullName evidence="1">Putative hydro-lyase VSAL_I1435</fullName>
        <ecNumber evidence="1">4.2.1.-</ecNumber>
    </recommendedName>
</protein>
<name>Y1435_ALISL</name>
<sequence>MDKDLSLDNLRKKIRSNEFTKATSGYAPGYLQANLVILPALWATDFLLFCQKNPVACPLIDVTQPGERYLPSIGADIDLSRDVPEYHVFYEGNFEASVPDLTELWQDDLVTFVLGCSFSFEEALIQSGLSIRNIDDGKNVSMYDTNIACQPAGKFDGNFVVSMRPFTPKDAIRAIQITTRFPKSHGAPVHFGDPSVIGISDIAKPNYGEAVHINSDEIPVFWACGVTPQNVIRQSRPPFCITHAPGKMLITDRLSSEFAVL</sequence>
<organism>
    <name type="scientific">Aliivibrio salmonicida (strain LFI1238)</name>
    <name type="common">Vibrio salmonicida (strain LFI1238)</name>
    <dbReference type="NCBI Taxonomy" id="316275"/>
    <lineage>
        <taxon>Bacteria</taxon>
        <taxon>Pseudomonadati</taxon>
        <taxon>Pseudomonadota</taxon>
        <taxon>Gammaproteobacteria</taxon>
        <taxon>Vibrionales</taxon>
        <taxon>Vibrionaceae</taxon>
        <taxon>Aliivibrio</taxon>
    </lineage>
</organism>
<feature type="chain" id="PRO_0000379815" description="Putative hydro-lyase VSAL_I1435">
    <location>
        <begin position="1"/>
        <end position="261"/>
    </location>
</feature>
<evidence type="ECO:0000255" key="1">
    <source>
        <dbReference type="HAMAP-Rule" id="MF_01830"/>
    </source>
</evidence>
<accession>B6EKU7</accession>
<dbReference type="EC" id="4.2.1.-" evidence="1"/>
<dbReference type="EMBL" id="FM178379">
    <property type="protein sequence ID" value="CAQ79120.1"/>
    <property type="molecule type" value="Genomic_DNA"/>
</dbReference>
<dbReference type="RefSeq" id="WP_012550115.1">
    <property type="nucleotide sequence ID" value="NC_011312.1"/>
</dbReference>
<dbReference type="SMR" id="B6EKU7"/>
<dbReference type="KEGG" id="vsa:VSAL_I1435"/>
<dbReference type="eggNOG" id="COG4336">
    <property type="taxonomic scope" value="Bacteria"/>
</dbReference>
<dbReference type="HOGENOM" id="CLU_059759_0_0_6"/>
<dbReference type="Proteomes" id="UP000001730">
    <property type="component" value="Chromosome 1"/>
</dbReference>
<dbReference type="GO" id="GO:0016829">
    <property type="term" value="F:lyase activity"/>
    <property type="evidence" value="ECO:0007669"/>
    <property type="project" value="UniProtKB-KW"/>
</dbReference>
<dbReference type="FunFam" id="3.30.2040.10:FF:000001">
    <property type="entry name" value="D-glutamate cyclase, mitochondrial"/>
    <property type="match status" value="1"/>
</dbReference>
<dbReference type="Gene3D" id="3.40.1640.10">
    <property type="entry name" value="PSTPO5379-like"/>
    <property type="match status" value="1"/>
</dbReference>
<dbReference type="Gene3D" id="3.30.2040.10">
    <property type="entry name" value="PSTPO5379-like domain"/>
    <property type="match status" value="1"/>
</dbReference>
<dbReference type="HAMAP" id="MF_01830">
    <property type="entry name" value="Hydro_lyase"/>
    <property type="match status" value="1"/>
</dbReference>
<dbReference type="InterPro" id="IPR009906">
    <property type="entry name" value="D-Glu_cyclase"/>
</dbReference>
<dbReference type="InterPro" id="IPR038021">
    <property type="entry name" value="Putative_hydro-lyase"/>
</dbReference>
<dbReference type="InterPro" id="IPR016938">
    <property type="entry name" value="UPF0317"/>
</dbReference>
<dbReference type="NCBIfam" id="NF003969">
    <property type="entry name" value="PRK05463.1"/>
    <property type="match status" value="1"/>
</dbReference>
<dbReference type="PANTHER" id="PTHR32022">
    <property type="entry name" value="D-GLUTAMATE CYCLASE, MITOCHONDRIAL"/>
    <property type="match status" value="1"/>
</dbReference>
<dbReference type="PANTHER" id="PTHR32022:SF10">
    <property type="entry name" value="D-GLUTAMATE CYCLASE, MITOCHONDRIAL"/>
    <property type="match status" value="1"/>
</dbReference>
<dbReference type="Pfam" id="PF07286">
    <property type="entry name" value="D-Glu_cyclase"/>
    <property type="match status" value="1"/>
</dbReference>
<dbReference type="PIRSF" id="PIRSF029755">
    <property type="entry name" value="UCP029755"/>
    <property type="match status" value="1"/>
</dbReference>
<dbReference type="SUPFAM" id="SSF160920">
    <property type="entry name" value="PSTPO5379-like"/>
    <property type="match status" value="1"/>
</dbReference>
<comment type="similarity">
    <text evidence="1">Belongs to the D-glutamate cyclase family.</text>
</comment>
<proteinExistence type="inferred from homology"/>
<gene>
    <name type="ordered locus">VSAL_I1435</name>
</gene>
<reference key="1">
    <citation type="journal article" date="2008" name="BMC Genomics">
        <title>The genome sequence of the fish pathogen Aliivibrio salmonicida strain LFI1238 shows extensive evidence of gene decay.</title>
        <authorList>
            <person name="Hjerde E."/>
            <person name="Lorentzen M.S."/>
            <person name="Holden M.T."/>
            <person name="Seeger K."/>
            <person name="Paulsen S."/>
            <person name="Bason N."/>
            <person name="Churcher C."/>
            <person name="Harris D."/>
            <person name="Norbertczak H."/>
            <person name="Quail M.A."/>
            <person name="Sanders S."/>
            <person name="Thurston S."/>
            <person name="Parkhill J."/>
            <person name="Willassen N.P."/>
            <person name="Thomson N.R."/>
        </authorList>
    </citation>
    <scope>NUCLEOTIDE SEQUENCE [LARGE SCALE GENOMIC DNA]</scope>
    <source>
        <strain>LFI1238</strain>
    </source>
</reference>
<keyword id="KW-0456">Lyase</keyword>